<evidence type="ECO:0000255" key="1">
    <source>
        <dbReference type="HAMAP-Rule" id="MF_01014"/>
    </source>
</evidence>
<organism>
    <name type="scientific">Xanthomonas euvesicatoria pv. vesicatoria (strain 85-10)</name>
    <name type="common">Xanthomonas campestris pv. vesicatoria</name>
    <dbReference type="NCBI Taxonomy" id="316273"/>
    <lineage>
        <taxon>Bacteria</taxon>
        <taxon>Pseudomonadati</taxon>
        <taxon>Pseudomonadota</taxon>
        <taxon>Gammaproteobacteria</taxon>
        <taxon>Lysobacterales</taxon>
        <taxon>Lysobacteraceae</taxon>
        <taxon>Xanthomonas</taxon>
    </lineage>
</organism>
<reference key="1">
    <citation type="journal article" date="2005" name="J. Bacteriol.">
        <title>Insights into genome plasticity and pathogenicity of the plant pathogenic Bacterium Xanthomonas campestris pv. vesicatoria revealed by the complete genome sequence.</title>
        <authorList>
            <person name="Thieme F."/>
            <person name="Koebnik R."/>
            <person name="Bekel T."/>
            <person name="Berger C."/>
            <person name="Boch J."/>
            <person name="Buettner D."/>
            <person name="Caldana C."/>
            <person name="Gaigalat L."/>
            <person name="Goesmann A."/>
            <person name="Kay S."/>
            <person name="Kirchner O."/>
            <person name="Lanz C."/>
            <person name="Linke B."/>
            <person name="McHardy A.C."/>
            <person name="Meyer F."/>
            <person name="Mittenhuber G."/>
            <person name="Nies D.H."/>
            <person name="Niesbach-Kloesgen U."/>
            <person name="Patschkowski T."/>
            <person name="Rueckert C."/>
            <person name="Rupp O."/>
            <person name="Schneiker S."/>
            <person name="Schuster S.C."/>
            <person name="Vorhoelter F.J."/>
            <person name="Weber E."/>
            <person name="Puehler A."/>
            <person name="Bonas U."/>
            <person name="Bartels D."/>
            <person name="Kaiser O."/>
        </authorList>
    </citation>
    <scope>NUCLEOTIDE SEQUENCE [LARGE SCALE GENOMIC DNA]</scope>
    <source>
        <strain>85-10</strain>
    </source>
</reference>
<keyword id="KW-0028">Amino-acid biosynthesis</keyword>
<keyword id="KW-0963">Cytoplasm</keyword>
<keyword id="KW-0368">Histidine biosynthesis</keyword>
<keyword id="KW-0413">Isomerase</keyword>
<comment type="catalytic activity">
    <reaction evidence="1">
        <text>1-(5-phospho-beta-D-ribosyl)-5-[(5-phospho-beta-D-ribosylamino)methylideneamino]imidazole-4-carboxamide = 5-[(5-phospho-1-deoxy-D-ribulos-1-ylimino)methylamino]-1-(5-phospho-beta-D-ribosyl)imidazole-4-carboxamide</text>
        <dbReference type="Rhea" id="RHEA:15469"/>
        <dbReference type="ChEBI" id="CHEBI:58435"/>
        <dbReference type="ChEBI" id="CHEBI:58525"/>
        <dbReference type="EC" id="5.3.1.16"/>
    </reaction>
</comment>
<comment type="pathway">
    <text evidence="1">Amino-acid biosynthesis; L-histidine biosynthesis; L-histidine from 5-phospho-alpha-D-ribose 1-diphosphate: step 4/9.</text>
</comment>
<comment type="subcellular location">
    <subcellularLocation>
        <location evidence="1">Cytoplasm</location>
    </subcellularLocation>
</comment>
<comment type="similarity">
    <text evidence="1">Belongs to the HisA/HisF family.</text>
</comment>
<sequence>MSFTVYPALDIRNGRVVRLLQGDYARETQYGDDVLPRAQAFADAGAQWMHLVDLDAAKAGGYTLAGTLGEIARATGLRVQTGGGVRSREDVARILDAGAARVVIGSLAVRNSEMVVGWLQEFGADRLTIALDTRQDANGIWQLPVHGWTETADATLDQLAVRYAQSGLQHLLCTDIARDGMLSGPNMALYAHLRALTPQLQVQVSGGARNLADVAAAKAAGCAGIVLGKALLEGHLHLEEALAC</sequence>
<protein>
    <recommendedName>
        <fullName evidence="1">1-(5-phosphoribosyl)-5-[(5-phosphoribosylamino)methylideneamino] imidazole-4-carboxamide isomerase</fullName>
        <ecNumber evidence="1">5.3.1.16</ecNumber>
    </recommendedName>
    <alternativeName>
        <fullName evidence="1">Phosphoribosylformimino-5-aminoimidazole carboxamide ribotide isomerase</fullName>
    </alternativeName>
</protein>
<gene>
    <name evidence="1" type="primary">hisA</name>
    <name type="ordered locus">XCV1879</name>
</gene>
<accession>Q3BUF3</accession>
<proteinExistence type="inferred from homology"/>
<feature type="chain" id="PRO_0000229095" description="1-(5-phosphoribosyl)-5-[(5-phosphoribosylamino)methylideneamino] imidazole-4-carboxamide isomerase">
    <location>
        <begin position="1"/>
        <end position="244"/>
    </location>
</feature>
<feature type="active site" description="Proton acceptor" evidence="1">
    <location>
        <position position="10"/>
    </location>
</feature>
<feature type="active site" description="Proton donor" evidence="1">
    <location>
        <position position="132"/>
    </location>
</feature>
<name>HIS4_XANE5</name>
<dbReference type="EC" id="5.3.1.16" evidence="1"/>
<dbReference type="EMBL" id="AM039952">
    <property type="protein sequence ID" value="CAJ23556.1"/>
    <property type="molecule type" value="Genomic_DNA"/>
</dbReference>
<dbReference type="RefSeq" id="WP_011347189.1">
    <property type="nucleotide sequence ID" value="NZ_CP017190.1"/>
</dbReference>
<dbReference type="SMR" id="Q3BUF3"/>
<dbReference type="STRING" id="456327.BJD11_13030"/>
<dbReference type="KEGG" id="xcv:XCV1879"/>
<dbReference type="eggNOG" id="COG0106">
    <property type="taxonomic scope" value="Bacteria"/>
</dbReference>
<dbReference type="HOGENOM" id="CLU_048577_1_2_6"/>
<dbReference type="UniPathway" id="UPA00031">
    <property type="reaction ID" value="UER00009"/>
</dbReference>
<dbReference type="Proteomes" id="UP000007069">
    <property type="component" value="Chromosome"/>
</dbReference>
<dbReference type="GO" id="GO:0005737">
    <property type="term" value="C:cytoplasm"/>
    <property type="evidence" value="ECO:0007669"/>
    <property type="project" value="UniProtKB-SubCell"/>
</dbReference>
<dbReference type="GO" id="GO:0003949">
    <property type="term" value="F:1-(5-phosphoribosyl)-5-[(5-phosphoribosylamino)methylideneamino]imidazole-4-carboxamide isomerase activity"/>
    <property type="evidence" value="ECO:0007669"/>
    <property type="project" value="UniProtKB-UniRule"/>
</dbReference>
<dbReference type="GO" id="GO:0000105">
    <property type="term" value="P:L-histidine biosynthetic process"/>
    <property type="evidence" value="ECO:0007669"/>
    <property type="project" value="UniProtKB-UniRule"/>
</dbReference>
<dbReference type="GO" id="GO:0000162">
    <property type="term" value="P:L-tryptophan biosynthetic process"/>
    <property type="evidence" value="ECO:0007669"/>
    <property type="project" value="TreeGrafter"/>
</dbReference>
<dbReference type="CDD" id="cd04732">
    <property type="entry name" value="HisA"/>
    <property type="match status" value="1"/>
</dbReference>
<dbReference type="FunFam" id="3.20.20.70:FF:000009">
    <property type="entry name" value="1-(5-phosphoribosyl)-5-[(5-phosphoribosylamino)methylideneamino] imidazole-4-carboxamide isomerase"/>
    <property type="match status" value="1"/>
</dbReference>
<dbReference type="Gene3D" id="3.20.20.70">
    <property type="entry name" value="Aldolase class I"/>
    <property type="match status" value="1"/>
</dbReference>
<dbReference type="HAMAP" id="MF_01014">
    <property type="entry name" value="HisA"/>
    <property type="match status" value="1"/>
</dbReference>
<dbReference type="InterPro" id="IPR013785">
    <property type="entry name" value="Aldolase_TIM"/>
</dbReference>
<dbReference type="InterPro" id="IPR006062">
    <property type="entry name" value="His_biosynth"/>
</dbReference>
<dbReference type="InterPro" id="IPR006063">
    <property type="entry name" value="HisA_bact_arch"/>
</dbReference>
<dbReference type="InterPro" id="IPR044524">
    <property type="entry name" value="Isoase_HisA-like"/>
</dbReference>
<dbReference type="InterPro" id="IPR023016">
    <property type="entry name" value="Isoase_HisA-like_bact"/>
</dbReference>
<dbReference type="InterPro" id="IPR011060">
    <property type="entry name" value="RibuloseP-bd_barrel"/>
</dbReference>
<dbReference type="NCBIfam" id="TIGR00007">
    <property type="entry name" value="1-(5-phosphoribosyl)-5-[(5-phosphoribosylamino)methylideneamino]imidazole-4-carboxamide isomerase"/>
    <property type="match status" value="1"/>
</dbReference>
<dbReference type="PANTHER" id="PTHR43090">
    <property type="entry name" value="1-(5-PHOSPHORIBOSYL)-5-[(5-PHOSPHORIBOSYLAMINO)METHYLIDENEAMINO] IMIDAZOLE-4-CARBOXAMIDE ISOMERASE"/>
    <property type="match status" value="1"/>
</dbReference>
<dbReference type="PANTHER" id="PTHR43090:SF2">
    <property type="entry name" value="1-(5-PHOSPHORIBOSYL)-5-[(5-PHOSPHORIBOSYLAMINO)METHYLIDENEAMINO] IMIDAZOLE-4-CARBOXAMIDE ISOMERASE"/>
    <property type="match status" value="1"/>
</dbReference>
<dbReference type="Pfam" id="PF00977">
    <property type="entry name" value="His_biosynth"/>
    <property type="match status" value="1"/>
</dbReference>
<dbReference type="SUPFAM" id="SSF51366">
    <property type="entry name" value="Ribulose-phoshate binding barrel"/>
    <property type="match status" value="1"/>
</dbReference>